<name>RUTR_ECO57</name>
<evidence type="ECO:0000250" key="1"/>
<evidence type="ECO:0000255" key="2">
    <source>
        <dbReference type="PROSITE-ProRule" id="PRU00335"/>
    </source>
</evidence>
<comment type="function">
    <text evidence="1">Master transcription regulator which represses the degradation of pyrimidines (rutABCDEFG) and purines (gcl operon) for maintenance of metabolic balance between pyrimidines and purines. It also regulates the synthesis of pyrimidine nucleotides and arginine from glutamine (carAB) and the supply of glutamate (gadABWX) (By similarity).</text>
</comment>
<comment type="subunit">
    <text evidence="1">Homodimer.</text>
</comment>
<keyword id="KW-0238">DNA-binding</keyword>
<keyword id="KW-1185">Reference proteome</keyword>
<keyword id="KW-0678">Repressor</keyword>
<keyword id="KW-0804">Transcription</keyword>
<keyword id="KW-0805">Transcription regulation</keyword>
<dbReference type="EMBL" id="AE005174">
    <property type="protein sequence ID" value="AAG55629.1"/>
    <property type="molecule type" value="Genomic_DNA"/>
</dbReference>
<dbReference type="EMBL" id="BA000007">
    <property type="protein sequence ID" value="BAB34682.1"/>
    <property type="molecule type" value="Genomic_DNA"/>
</dbReference>
<dbReference type="PIR" id="A85646">
    <property type="entry name" value="A85646"/>
</dbReference>
<dbReference type="PIR" id="C90786">
    <property type="entry name" value="C90786"/>
</dbReference>
<dbReference type="RefSeq" id="NP_309286.1">
    <property type="nucleotide sequence ID" value="NC_002695.1"/>
</dbReference>
<dbReference type="RefSeq" id="WP_001302258.1">
    <property type="nucleotide sequence ID" value="NZ_VOAI01000026.1"/>
</dbReference>
<dbReference type="SMR" id="Q8X4Z7"/>
<dbReference type="STRING" id="155864.Z1512"/>
<dbReference type="GeneID" id="912884"/>
<dbReference type="KEGG" id="ece:Z1512"/>
<dbReference type="KEGG" id="ecs:ECs_1259"/>
<dbReference type="PATRIC" id="fig|386585.9.peg.1362"/>
<dbReference type="eggNOG" id="COG1309">
    <property type="taxonomic scope" value="Bacteria"/>
</dbReference>
<dbReference type="HOGENOM" id="CLU_069356_1_0_6"/>
<dbReference type="OMA" id="DPHHLIF"/>
<dbReference type="Proteomes" id="UP000000558">
    <property type="component" value="Chromosome"/>
</dbReference>
<dbReference type="Proteomes" id="UP000002519">
    <property type="component" value="Chromosome"/>
</dbReference>
<dbReference type="GO" id="GO:0003700">
    <property type="term" value="F:DNA-binding transcription factor activity"/>
    <property type="evidence" value="ECO:0007669"/>
    <property type="project" value="TreeGrafter"/>
</dbReference>
<dbReference type="GO" id="GO:0000976">
    <property type="term" value="F:transcription cis-regulatory region binding"/>
    <property type="evidence" value="ECO:0007669"/>
    <property type="project" value="TreeGrafter"/>
</dbReference>
<dbReference type="GO" id="GO:0045892">
    <property type="term" value="P:negative regulation of DNA-templated transcription"/>
    <property type="evidence" value="ECO:0007669"/>
    <property type="project" value="InterPro"/>
</dbReference>
<dbReference type="FunFam" id="1.10.357.10:FF:000010">
    <property type="entry name" value="HTH-type transcriptional regulator RutR"/>
    <property type="match status" value="1"/>
</dbReference>
<dbReference type="Gene3D" id="1.10.10.60">
    <property type="entry name" value="Homeodomain-like"/>
    <property type="match status" value="1"/>
</dbReference>
<dbReference type="Gene3D" id="1.10.357.10">
    <property type="entry name" value="Tetracycline Repressor, domain 2"/>
    <property type="match status" value="1"/>
</dbReference>
<dbReference type="InterPro" id="IPR009057">
    <property type="entry name" value="Homeodomain-like_sf"/>
</dbReference>
<dbReference type="InterPro" id="IPR050109">
    <property type="entry name" value="HTH-type_TetR-like_transc_reg"/>
</dbReference>
<dbReference type="InterPro" id="IPR001647">
    <property type="entry name" value="HTH_TetR"/>
</dbReference>
<dbReference type="InterPro" id="IPR036271">
    <property type="entry name" value="Tet_transcr_reg_TetR-rel_C_sf"/>
</dbReference>
<dbReference type="InterPro" id="IPR019915">
    <property type="entry name" value="Tscrpt_reg_pyr_util_RutR"/>
</dbReference>
<dbReference type="InterPro" id="IPR013573">
    <property type="entry name" value="Tscrpt_reg_YcdC_C"/>
</dbReference>
<dbReference type="NCBIfam" id="NF011584">
    <property type="entry name" value="PRK15008.1"/>
    <property type="match status" value="1"/>
</dbReference>
<dbReference type="NCBIfam" id="TIGR03613">
    <property type="entry name" value="RutR"/>
    <property type="match status" value="1"/>
</dbReference>
<dbReference type="PANTHER" id="PTHR30055">
    <property type="entry name" value="HTH-TYPE TRANSCRIPTIONAL REGULATOR RUTR"/>
    <property type="match status" value="1"/>
</dbReference>
<dbReference type="PANTHER" id="PTHR30055:SF196">
    <property type="entry name" value="HTH-TYPE TRANSCRIPTIONAL REGULATOR RUTR"/>
    <property type="match status" value="1"/>
</dbReference>
<dbReference type="Pfam" id="PF08362">
    <property type="entry name" value="TetR_C_3"/>
    <property type="match status" value="1"/>
</dbReference>
<dbReference type="Pfam" id="PF00440">
    <property type="entry name" value="TetR_N"/>
    <property type="match status" value="1"/>
</dbReference>
<dbReference type="PRINTS" id="PR00455">
    <property type="entry name" value="HTHTETR"/>
</dbReference>
<dbReference type="SUPFAM" id="SSF46689">
    <property type="entry name" value="Homeodomain-like"/>
    <property type="match status" value="1"/>
</dbReference>
<dbReference type="SUPFAM" id="SSF48498">
    <property type="entry name" value="Tetracyclin repressor-like, C-terminal domain"/>
    <property type="match status" value="1"/>
</dbReference>
<dbReference type="PROSITE" id="PS50977">
    <property type="entry name" value="HTH_TETR_2"/>
    <property type="match status" value="1"/>
</dbReference>
<gene>
    <name type="primary">rutR</name>
    <name type="ordered locus">Z1512</name>
    <name type="ordered locus">ECs1259</name>
</gene>
<proteinExistence type="inferred from homology"/>
<accession>Q8X4Z7</accession>
<accession>Q7AFN0</accession>
<organism>
    <name type="scientific">Escherichia coli O157:H7</name>
    <dbReference type="NCBI Taxonomy" id="83334"/>
    <lineage>
        <taxon>Bacteria</taxon>
        <taxon>Pseudomonadati</taxon>
        <taxon>Pseudomonadota</taxon>
        <taxon>Gammaproteobacteria</taxon>
        <taxon>Enterobacterales</taxon>
        <taxon>Enterobacteriaceae</taxon>
        <taxon>Escherichia</taxon>
    </lineage>
</organism>
<sequence>MTQGAVKTTGKRSRAVSAKKKAILSAALDTFSQFGFHGTRLEQIAELAGVSKTNLLYYFPSKEALYIAVLRQILDIWLAPLKAFREDFAPLAAIKEYIRLKLEVSRDYPQASRLFCMEMLAGAPLLMDELTGDLKSLIDEKSALIAGWVKSGKLAPIDPQHLIFMIWASTQHYADFAPQVEAVTGATLRDEVFFNQTVENVQRIIIEGIRPR</sequence>
<feature type="chain" id="PRO_0000234093" description="HTH-type transcriptional regulator RutR">
    <location>
        <begin position="1"/>
        <end position="212"/>
    </location>
</feature>
<feature type="domain" description="HTH tetR-type" evidence="2">
    <location>
        <begin position="17"/>
        <end position="77"/>
    </location>
</feature>
<feature type="DNA-binding region" description="H-T-H motif" evidence="2">
    <location>
        <begin position="39"/>
        <end position="58"/>
    </location>
</feature>
<reference key="1">
    <citation type="journal article" date="2001" name="Nature">
        <title>Genome sequence of enterohaemorrhagic Escherichia coli O157:H7.</title>
        <authorList>
            <person name="Perna N.T."/>
            <person name="Plunkett G. III"/>
            <person name="Burland V."/>
            <person name="Mau B."/>
            <person name="Glasner J.D."/>
            <person name="Rose D.J."/>
            <person name="Mayhew G.F."/>
            <person name="Evans P.S."/>
            <person name="Gregor J."/>
            <person name="Kirkpatrick H.A."/>
            <person name="Posfai G."/>
            <person name="Hackett J."/>
            <person name="Klink S."/>
            <person name="Boutin A."/>
            <person name="Shao Y."/>
            <person name="Miller L."/>
            <person name="Grotbeck E.J."/>
            <person name="Davis N.W."/>
            <person name="Lim A."/>
            <person name="Dimalanta E.T."/>
            <person name="Potamousis K."/>
            <person name="Apodaca J."/>
            <person name="Anantharaman T.S."/>
            <person name="Lin J."/>
            <person name="Yen G."/>
            <person name="Schwartz D.C."/>
            <person name="Welch R.A."/>
            <person name="Blattner F.R."/>
        </authorList>
    </citation>
    <scope>NUCLEOTIDE SEQUENCE [LARGE SCALE GENOMIC DNA]</scope>
    <source>
        <strain>O157:H7 / EDL933 / ATCC 700927 / EHEC</strain>
    </source>
</reference>
<reference key="2">
    <citation type="journal article" date="2001" name="DNA Res.">
        <title>Complete genome sequence of enterohemorrhagic Escherichia coli O157:H7 and genomic comparison with a laboratory strain K-12.</title>
        <authorList>
            <person name="Hayashi T."/>
            <person name="Makino K."/>
            <person name="Ohnishi M."/>
            <person name="Kurokawa K."/>
            <person name="Ishii K."/>
            <person name="Yokoyama K."/>
            <person name="Han C.-G."/>
            <person name="Ohtsubo E."/>
            <person name="Nakayama K."/>
            <person name="Murata T."/>
            <person name="Tanaka M."/>
            <person name="Tobe T."/>
            <person name="Iida T."/>
            <person name="Takami H."/>
            <person name="Honda T."/>
            <person name="Sasakawa C."/>
            <person name="Ogasawara N."/>
            <person name="Yasunaga T."/>
            <person name="Kuhara S."/>
            <person name="Shiba T."/>
            <person name="Hattori M."/>
            <person name="Shinagawa H."/>
        </authorList>
    </citation>
    <scope>NUCLEOTIDE SEQUENCE [LARGE SCALE GENOMIC DNA]</scope>
    <source>
        <strain>O157:H7 / Sakai / RIMD 0509952 / EHEC</strain>
    </source>
</reference>
<protein>
    <recommendedName>
        <fullName>HTH-type transcriptional regulator RutR</fullName>
    </recommendedName>
    <alternativeName>
        <fullName>Rut operon repressor</fullName>
    </alternativeName>
</protein>